<keyword id="KW-0235">DNA replication</keyword>
<keyword id="KW-0238">DNA-binding</keyword>
<keyword id="KW-0489">Methyltransferase</keyword>
<keyword id="KW-1185">Reference proteome</keyword>
<keyword id="KW-0949">S-adenosyl-L-methionine</keyword>
<keyword id="KW-0808">Transferase</keyword>
<proteinExistence type="inferred from homology"/>
<comment type="function">
    <text evidence="2 3">An alpha subtype methylase, recognizes the double-stranded sequence 5'-GATC-3' and methylates A-2 (By similarity) (PubMed:12654995). May be involved in methyl-directed DNA mismatch repair, initiation of chromosome replication and gene expression (By similarity).</text>
</comment>
<comment type="catalytic activity">
    <reaction>
        <text>a 2'-deoxyadenosine in DNA + S-adenosyl-L-methionine = an N(6)-methyl-2'-deoxyadenosine in DNA + S-adenosyl-L-homocysteine + H(+)</text>
        <dbReference type="Rhea" id="RHEA:15197"/>
        <dbReference type="Rhea" id="RHEA-COMP:12418"/>
        <dbReference type="Rhea" id="RHEA-COMP:12419"/>
        <dbReference type="ChEBI" id="CHEBI:15378"/>
        <dbReference type="ChEBI" id="CHEBI:57856"/>
        <dbReference type="ChEBI" id="CHEBI:59789"/>
        <dbReference type="ChEBI" id="CHEBI:90615"/>
        <dbReference type="ChEBI" id="CHEBI:90616"/>
        <dbReference type="EC" id="2.1.1.72"/>
    </reaction>
</comment>
<comment type="similarity">
    <text evidence="4">Belongs to the N(4)/N(6)-methyltransferase family.</text>
</comment>
<evidence type="ECO:0000250" key="1"/>
<evidence type="ECO:0000250" key="2">
    <source>
        <dbReference type="UniProtKB" id="P0AEE8"/>
    </source>
</evidence>
<evidence type="ECO:0000303" key="3">
    <source>
    </source>
</evidence>
<evidence type="ECO:0000305" key="4"/>
<sequence>MKKNRAFLKWAGGKYPLLDDIKRHLPKGECLVEPFVGAGSVFLNTDFSRYILADINSDLISLYNIVKMRTDEYVQAARELFVPETNCAEVYYQFREEFNKSQDPFRRAVLFLYLNRYGYNGLCRYNLRGEFNVPFGRYKKPYFPEAELYHFAEKAQNAFFYCESYADSMARADDASVVYCDPPYAPLSATANFTAYHTNSFTLEQQAHLAEIAEGLVERHIPVLISNHDTMLTREWYQRAKLHVVKVRRSISSNGGTRKKVDELLALYKPGVVSPAKK</sequence>
<reference key="1">
    <citation type="journal article" date="2001" name="Nature">
        <title>Genome sequence of enterohaemorrhagic Escherichia coli O157:H7.</title>
        <authorList>
            <person name="Perna N.T."/>
            <person name="Plunkett G. III"/>
            <person name="Burland V."/>
            <person name="Mau B."/>
            <person name="Glasner J.D."/>
            <person name="Rose D.J."/>
            <person name="Mayhew G.F."/>
            <person name="Evans P.S."/>
            <person name="Gregor J."/>
            <person name="Kirkpatrick H.A."/>
            <person name="Posfai G."/>
            <person name="Hackett J."/>
            <person name="Klink S."/>
            <person name="Boutin A."/>
            <person name="Shao Y."/>
            <person name="Miller L."/>
            <person name="Grotbeck E.J."/>
            <person name="Davis N.W."/>
            <person name="Lim A."/>
            <person name="Dimalanta E.T."/>
            <person name="Potamousis K."/>
            <person name="Apodaca J."/>
            <person name="Anantharaman T.S."/>
            <person name="Lin J."/>
            <person name="Yen G."/>
            <person name="Schwartz D.C."/>
            <person name="Welch R.A."/>
            <person name="Blattner F.R."/>
        </authorList>
    </citation>
    <scope>NUCLEOTIDE SEQUENCE [LARGE SCALE GENOMIC DNA]</scope>
    <source>
        <strain>O157:H7 / EDL933 / ATCC 700927 / EHEC</strain>
    </source>
</reference>
<reference key="2">
    <citation type="journal article" date="2001" name="DNA Res.">
        <title>Complete genome sequence of enterohemorrhagic Escherichia coli O157:H7 and genomic comparison with a laboratory strain K-12.</title>
        <authorList>
            <person name="Hayashi T."/>
            <person name="Makino K."/>
            <person name="Ohnishi M."/>
            <person name="Kurokawa K."/>
            <person name="Ishii K."/>
            <person name="Yokoyama K."/>
            <person name="Han C.-G."/>
            <person name="Ohtsubo E."/>
            <person name="Nakayama K."/>
            <person name="Murata T."/>
            <person name="Tanaka M."/>
            <person name="Tobe T."/>
            <person name="Iida T."/>
            <person name="Takami H."/>
            <person name="Honda T."/>
            <person name="Sasakawa C."/>
            <person name="Ogasawara N."/>
            <person name="Yasunaga T."/>
            <person name="Kuhara S."/>
            <person name="Shiba T."/>
            <person name="Hattori M."/>
            <person name="Shinagawa H."/>
        </authorList>
    </citation>
    <scope>NUCLEOTIDE SEQUENCE [LARGE SCALE GENOMIC DNA]</scope>
    <source>
        <strain>O157:H7 / Sakai / RIMD 0509952 / EHEC</strain>
    </source>
</reference>
<reference key="3">
    <citation type="journal article" date="2003" name="Nucleic Acids Res.">
        <title>A nomenclature for restriction enzymes, DNA methyltransferases, homing endonucleases and their genes.</title>
        <authorList>
            <person name="Roberts R.J."/>
            <person name="Belfort M."/>
            <person name="Bestor T."/>
            <person name="Bhagwat A.S."/>
            <person name="Bickle T.A."/>
            <person name="Bitinaite J."/>
            <person name="Blumenthal R.M."/>
            <person name="Degtyarev S.K."/>
            <person name="Dryden D.T."/>
            <person name="Dybvig K."/>
            <person name="Firman K."/>
            <person name="Gromova E.S."/>
            <person name="Gumport R.I."/>
            <person name="Halford S.E."/>
            <person name="Hattman S."/>
            <person name="Heitman J."/>
            <person name="Hornby D.P."/>
            <person name="Janulaitis A."/>
            <person name="Jeltsch A."/>
            <person name="Josephsen J."/>
            <person name="Kiss A."/>
            <person name="Klaenhammer T.R."/>
            <person name="Kobayashi I."/>
            <person name="Kong H."/>
            <person name="Krueger D.H."/>
            <person name="Lacks S."/>
            <person name="Marinus M.G."/>
            <person name="Miyahara M."/>
            <person name="Morgan R.D."/>
            <person name="Murray N.E."/>
            <person name="Nagaraja V."/>
            <person name="Piekarowicz A."/>
            <person name="Pingoud A."/>
            <person name="Raleigh E."/>
            <person name="Rao D.N."/>
            <person name="Reich N."/>
            <person name="Repin V.E."/>
            <person name="Selker E.U."/>
            <person name="Shaw P.C."/>
            <person name="Stein D.C."/>
            <person name="Stoddard B.L."/>
            <person name="Szybalski W."/>
            <person name="Trautner T.A."/>
            <person name="Van Etten J.L."/>
            <person name="Vitor J.M."/>
            <person name="Wilson G.G."/>
            <person name="Xu S.Y."/>
        </authorList>
    </citation>
    <scope>NOMENCLATURE</scope>
    <scope>SUBTYPE</scope>
</reference>
<dbReference type="EC" id="2.1.1.72"/>
<dbReference type="EMBL" id="AE005174">
    <property type="protein sequence ID" value="AAG58487.1"/>
    <property type="molecule type" value="Genomic_DNA"/>
</dbReference>
<dbReference type="EMBL" id="BA000007">
    <property type="protein sequence ID" value="BAB37652.1"/>
    <property type="molecule type" value="Genomic_DNA"/>
</dbReference>
<dbReference type="PIR" id="C86003">
    <property type="entry name" value="C86003"/>
</dbReference>
<dbReference type="PIR" id="E91157">
    <property type="entry name" value="E91157"/>
</dbReference>
<dbReference type="RefSeq" id="NP_312256.1">
    <property type="nucleotide sequence ID" value="NC_002695.1"/>
</dbReference>
<dbReference type="RefSeq" id="WP_000742143.1">
    <property type="nucleotide sequence ID" value="NZ_SWKA01000005.1"/>
</dbReference>
<dbReference type="SMR" id="P0AEE9"/>
<dbReference type="STRING" id="155864.Z4740"/>
<dbReference type="REBASE" id="154998">
    <property type="entry name" value="M.VscVS12DamP"/>
</dbReference>
<dbReference type="REBASE" id="155474">
    <property type="entry name" value="M.VscVS05DamP"/>
</dbReference>
<dbReference type="REBASE" id="232309">
    <property type="entry name" value="M.Sen4024DamP"/>
</dbReference>
<dbReference type="REBASE" id="232684">
    <property type="entry name" value="M.Sen4839ORF1762P"/>
</dbReference>
<dbReference type="REBASE" id="232686">
    <property type="entry name" value="M.Sen4839DamP"/>
</dbReference>
<dbReference type="REBASE" id="252454">
    <property type="entry name" value="M.Ssp8227ORF2746P"/>
</dbReference>
<dbReference type="REBASE" id="5029">
    <property type="entry name" value="M.EcoO157DamP"/>
</dbReference>
<dbReference type="REBASE" id="5592">
    <property type="entry name" value="M.EcoKO157DamP"/>
</dbReference>
<dbReference type="GeneID" id="75206325"/>
<dbReference type="GeneID" id="915915"/>
<dbReference type="KEGG" id="ece:Z4740"/>
<dbReference type="KEGG" id="ecs:ECs_4229"/>
<dbReference type="PATRIC" id="fig|386585.9.peg.4415"/>
<dbReference type="eggNOG" id="COG0338">
    <property type="taxonomic scope" value="Bacteria"/>
</dbReference>
<dbReference type="HOGENOM" id="CLU_063430_0_1_6"/>
<dbReference type="OMA" id="YMNRHGF"/>
<dbReference type="BRENDA" id="2.1.1.72">
    <property type="organism ID" value="2026"/>
</dbReference>
<dbReference type="Proteomes" id="UP000000558">
    <property type="component" value="Chromosome"/>
</dbReference>
<dbReference type="Proteomes" id="UP000002519">
    <property type="component" value="Chromosome"/>
</dbReference>
<dbReference type="GO" id="GO:1904047">
    <property type="term" value="F:S-adenosyl-L-methionine binding"/>
    <property type="evidence" value="ECO:0007669"/>
    <property type="project" value="TreeGrafter"/>
</dbReference>
<dbReference type="GO" id="GO:0043565">
    <property type="term" value="F:sequence-specific DNA binding"/>
    <property type="evidence" value="ECO:0007669"/>
    <property type="project" value="TreeGrafter"/>
</dbReference>
<dbReference type="GO" id="GO:0009007">
    <property type="term" value="F:site-specific DNA-methyltransferase (adenine-specific) activity"/>
    <property type="evidence" value="ECO:0007669"/>
    <property type="project" value="UniProtKB-EC"/>
</dbReference>
<dbReference type="GO" id="GO:0006260">
    <property type="term" value="P:DNA replication"/>
    <property type="evidence" value="ECO:0007669"/>
    <property type="project" value="UniProtKB-KW"/>
</dbReference>
<dbReference type="GO" id="GO:0009307">
    <property type="term" value="P:DNA restriction-modification system"/>
    <property type="evidence" value="ECO:0007669"/>
    <property type="project" value="InterPro"/>
</dbReference>
<dbReference type="GO" id="GO:0032259">
    <property type="term" value="P:methylation"/>
    <property type="evidence" value="ECO:0007669"/>
    <property type="project" value="UniProtKB-KW"/>
</dbReference>
<dbReference type="GO" id="GO:0006298">
    <property type="term" value="P:mismatch repair"/>
    <property type="evidence" value="ECO:0007669"/>
    <property type="project" value="TreeGrafter"/>
</dbReference>
<dbReference type="FunFam" id="1.10.1020.10:FF:000001">
    <property type="entry name" value="Site-specific DNA-methyltransferase (adenine-specific)"/>
    <property type="match status" value="1"/>
</dbReference>
<dbReference type="Gene3D" id="1.10.1020.10">
    <property type="entry name" value="Adenine-specific Methyltransferase, Domain 2"/>
    <property type="match status" value="1"/>
</dbReference>
<dbReference type="Gene3D" id="3.40.50.150">
    <property type="entry name" value="Vaccinia Virus protein VP39"/>
    <property type="match status" value="1"/>
</dbReference>
<dbReference type="InterPro" id="IPR023095">
    <property type="entry name" value="Ade_MeTrfase_dom_2"/>
</dbReference>
<dbReference type="InterPro" id="IPR002052">
    <property type="entry name" value="DNA_methylase_N6_adenine_CS"/>
</dbReference>
<dbReference type="InterPro" id="IPR012263">
    <property type="entry name" value="M_m6A_EcoRV"/>
</dbReference>
<dbReference type="InterPro" id="IPR012327">
    <property type="entry name" value="MeTrfase_D12"/>
</dbReference>
<dbReference type="InterPro" id="IPR029063">
    <property type="entry name" value="SAM-dependent_MTases_sf"/>
</dbReference>
<dbReference type="NCBIfam" id="TIGR00571">
    <property type="entry name" value="dam"/>
    <property type="match status" value="1"/>
</dbReference>
<dbReference type="NCBIfam" id="NF008152">
    <property type="entry name" value="PRK10904.1"/>
    <property type="match status" value="1"/>
</dbReference>
<dbReference type="PANTHER" id="PTHR30481">
    <property type="entry name" value="DNA ADENINE METHYLASE"/>
    <property type="match status" value="1"/>
</dbReference>
<dbReference type="PANTHER" id="PTHR30481:SF3">
    <property type="entry name" value="DNA ADENINE METHYLASE"/>
    <property type="match status" value="1"/>
</dbReference>
<dbReference type="Pfam" id="PF02086">
    <property type="entry name" value="MethyltransfD12"/>
    <property type="match status" value="1"/>
</dbReference>
<dbReference type="PIRSF" id="PIRSF000398">
    <property type="entry name" value="M_m6A_EcoRV"/>
    <property type="match status" value="1"/>
</dbReference>
<dbReference type="PRINTS" id="PR00505">
    <property type="entry name" value="D12N6MTFRASE"/>
</dbReference>
<dbReference type="SUPFAM" id="SSF53335">
    <property type="entry name" value="S-adenosyl-L-methionine-dependent methyltransferases"/>
    <property type="match status" value="1"/>
</dbReference>
<dbReference type="PROSITE" id="PS00092">
    <property type="entry name" value="N6_MTASE"/>
    <property type="match status" value="1"/>
</dbReference>
<feature type="chain" id="PRO_0000087992" description="DNA adenine methylase">
    <location>
        <begin position="1"/>
        <end position="278"/>
    </location>
</feature>
<feature type="binding site" evidence="1">
    <location>
        <position position="10"/>
    </location>
    <ligand>
        <name>S-adenosyl-L-methionine</name>
        <dbReference type="ChEBI" id="CHEBI:59789"/>
    </ligand>
</feature>
<feature type="binding site" evidence="1">
    <location>
        <position position="14"/>
    </location>
    <ligand>
        <name>S-adenosyl-L-methionine</name>
        <dbReference type="ChEBI" id="CHEBI:59789"/>
    </ligand>
</feature>
<feature type="binding site" evidence="1">
    <location>
        <position position="54"/>
    </location>
    <ligand>
        <name>S-adenosyl-L-methionine</name>
        <dbReference type="ChEBI" id="CHEBI:59789"/>
    </ligand>
</feature>
<feature type="binding site" evidence="1">
    <location>
        <position position="181"/>
    </location>
    <ligand>
        <name>S-adenosyl-L-methionine</name>
        <dbReference type="ChEBI" id="CHEBI:59789"/>
    </ligand>
</feature>
<accession>P0AEE9</accession>
<accession>P00475</accession>
<gene>
    <name type="primary">dam</name>
    <name type="ordered locus">Z4740</name>
    <name type="ordered locus">ECs4229</name>
</gene>
<name>DMA_ECO57</name>
<organism>
    <name type="scientific">Escherichia coli O157:H7</name>
    <dbReference type="NCBI Taxonomy" id="83334"/>
    <lineage>
        <taxon>Bacteria</taxon>
        <taxon>Pseudomonadati</taxon>
        <taxon>Pseudomonadota</taxon>
        <taxon>Gammaproteobacteria</taxon>
        <taxon>Enterobacterales</taxon>
        <taxon>Enterobacteriaceae</taxon>
        <taxon>Escherichia</taxon>
    </lineage>
</organism>
<protein>
    <recommendedName>
        <fullName>DNA adenine methylase</fullName>
        <ecNumber>2.1.1.72</ecNumber>
    </recommendedName>
    <alternativeName>
        <fullName>DNA adenine methyltransferase</fullName>
    </alternativeName>
    <alternativeName>
        <fullName>Deoxyadenosyl-methyltransferase</fullName>
    </alternativeName>
    <alternativeName>
        <fullName evidence="3">Orphan methyltransferase M.EcoO157DamP/M.EcoKO157DamP</fullName>
        <shortName evidence="3">M.EcoO157DamP/M.EcoKO157DamP</shortName>
    </alternativeName>
</protein>